<dbReference type="GO" id="GO:0005576">
    <property type="term" value="C:extracellular region"/>
    <property type="evidence" value="ECO:0007669"/>
    <property type="project" value="UniProtKB-SubCell"/>
</dbReference>
<dbReference type="GO" id="GO:0006952">
    <property type="term" value="P:defense response"/>
    <property type="evidence" value="ECO:0007669"/>
    <property type="project" value="UniProtKB-KW"/>
</dbReference>
<sequence>GWASKIAQTLGKMAKVGLQELIQPK</sequence>
<feature type="peptide" id="PRO_0000440799" description="Xenoposin precursor fragment BM3" evidence="2">
    <location>
        <begin position="1"/>
        <end position="25"/>
    </location>
</feature>
<organism evidence="3">
    <name type="scientific">Xenopus boumbaensis</name>
    <name type="common">Mawa clawed frog</name>
    <dbReference type="NCBI Taxonomy" id="288550"/>
    <lineage>
        <taxon>Eukaryota</taxon>
        <taxon>Metazoa</taxon>
        <taxon>Chordata</taxon>
        <taxon>Craniata</taxon>
        <taxon>Vertebrata</taxon>
        <taxon>Euteleostomi</taxon>
        <taxon>Amphibia</taxon>
        <taxon>Batrachia</taxon>
        <taxon>Anura</taxon>
        <taxon>Pipoidea</taxon>
        <taxon>Pipidae</taxon>
        <taxon>Xenopodinae</taxon>
        <taxon>Xenopus</taxon>
        <taxon>Xenopus</taxon>
    </lineage>
</organism>
<protein>
    <recommendedName>
        <fullName evidence="3">Xenoposin precursor fragment BM3</fullName>
    </recommendedName>
    <alternativeName>
        <fullName evidence="3">XPF-BM3</fullName>
    </alternativeName>
</protein>
<reference evidence="4" key="1">
    <citation type="journal article" date="2015" name="Peptides">
        <title>Host-defense and trefoil factor family peptides in skin secretions of the Mawa clawed frog Xenopus boumbaensis (Pipidae).</title>
        <authorList>
            <person name="Conlon J.M."/>
            <person name="Mechkarska M."/>
            <person name="Kolodziejek J."/>
            <person name="Leprince J."/>
            <person name="Coquet L."/>
            <person name="Jouenne T."/>
            <person name="Vaudry H."/>
            <person name="Nowotny N."/>
            <person name="King J.D."/>
        </authorList>
    </citation>
    <scope>PROTEIN SEQUENCE</scope>
    <scope>SUBCELLULAR LOCATION</scope>
    <scope>MASS SPECTROMETRY</scope>
    <source>
        <tissue evidence="3">Skin secretion</tissue>
    </source>
</reference>
<name>XFBM3_XENBM</name>
<proteinExistence type="evidence at protein level"/>
<evidence type="ECO:0000250" key="1">
    <source>
        <dbReference type="UniProtKB" id="C0HK86"/>
    </source>
</evidence>
<evidence type="ECO:0000269" key="2">
    <source>
    </source>
</evidence>
<evidence type="ECO:0000303" key="3">
    <source>
    </source>
</evidence>
<evidence type="ECO:0000305" key="4"/>
<evidence type="ECO:0000305" key="5">
    <source>
    </source>
</evidence>
<comment type="function">
    <text evidence="1">Antimicrobial peptide.</text>
</comment>
<comment type="subcellular location">
    <subcellularLocation>
        <location evidence="2">Secreted</location>
    </subcellularLocation>
</comment>
<comment type="tissue specificity">
    <text evidence="5">Expressed by the skin glands.</text>
</comment>
<comment type="mass spectrometry"/>
<comment type="similarity">
    <text evidence="4">Belongs to the gastrin/cholecystokinin family. Magainin subfamily.</text>
</comment>
<accession>C0HKM2</accession>
<keyword id="KW-0878">Amphibian defense peptide</keyword>
<keyword id="KW-0929">Antimicrobial</keyword>
<keyword id="KW-0903">Direct protein sequencing</keyword>
<keyword id="KW-0964">Secreted</keyword>